<gene>
    <name evidence="1" type="primary">trpD</name>
    <name type="ordered locus">BCG9842_B4051</name>
</gene>
<organism>
    <name type="scientific">Bacillus cereus (strain G9842)</name>
    <dbReference type="NCBI Taxonomy" id="405531"/>
    <lineage>
        <taxon>Bacteria</taxon>
        <taxon>Bacillati</taxon>
        <taxon>Bacillota</taxon>
        <taxon>Bacilli</taxon>
        <taxon>Bacillales</taxon>
        <taxon>Bacillaceae</taxon>
        <taxon>Bacillus</taxon>
        <taxon>Bacillus cereus group</taxon>
    </lineage>
</organism>
<name>TRPD_BACC2</name>
<proteinExistence type="inferred from homology"/>
<keyword id="KW-0028">Amino-acid biosynthesis</keyword>
<keyword id="KW-0057">Aromatic amino acid biosynthesis</keyword>
<keyword id="KW-0328">Glycosyltransferase</keyword>
<keyword id="KW-0460">Magnesium</keyword>
<keyword id="KW-0479">Metal-binding</keyword>
<keyword id="KW-0808">Transferase</keyword>
<keyword id="KW-0822">Tryptophan biosynthesis</keyword>
<sequence length="341" mass="37027">MNNYLRKLVEGQHLTEEEMYKAGLLLLSENILESEIAAFLVLLKAKGETAEEIYGLVRALREKALPFSNHIQGAMDNCGTGGDGAQTFNISTTSAFVLAGAGVKVAKHGNRAVSSKTGSADLLEELGVNISSTPNEIDYLLEHVGIAFLFAPAMHPALRRIMKIRKELNVPTIFNLIGPLTNPVNLETQFVGIYKRDMLLPVAQVLQKLGRKQALVVNGSGFLDEASLQGENQVVLLKDNEIVEMNIDPENYGFSRVKNEEIRGGNSQENAKITVGVLSGEKSVYRDTVLLNAGLALFANGKTETIEEGIKLATHSIDSGKALTKLNLLIAASNEKLERVN</sequence>
<protein>
    <recommendedName>
        <fullName evidence="1">Anthranilate phosphoribosyltransferase</fullName>
        <ecNumber evidence="1">2.4.2.18</ecNumber>
    </recommendedName>
</protein>
<comment type="function">
    <text evidence="1">Catalyzes the transfer of the phosphoribosyl group of 5-phosphorylribose-1-pyrophosphate (PRPP) to anthranilate to yield N-(5'-phosphoribosyl)-anthranilate (PRA).</text>
</comment>
<comment type="catalytic activity">
    <reaction evidence="1">
        <text>N-(5-phospho-beta-D-ribosyl)anthranilate + diphosphate = 5-phospho-alpha-D-ribose 1-diphosphate + anthranilate</text>
        <dbReference type="Rhea" id="RHEA:11768"/>
        <dbReference type="ChEBI" id="CHEBI:16567"/>
        <dbReference type="ChEBI" id="CHEBI:18277"/>
        <dbReference type="ChEBI" id="CHEBI:33019"/>
        <dbReference type="ChEBI" id="CHEBI:58017"/>
        <dbReference type="EC" id="2.4.2.18"/>
    </reaction>
</comment>
<comment type="cofactor">
    <cofactor evidence="1">
        <name>Mg(2+)</name>
        <dbReference type="ChEBI" id="CHEBI:18420"/>
    </cofactor>
    <text evidence="1">Binds 2 magnesium ions per monomer.</text>
</comment>
<comment type="pathway">
    <text evidence="1">Amino-acid biosynthesis; L-tryptophan biosynthesis; L-tryptophan from chorismate: step 2/5.</text>
</comment>
<comment type="subunit">
    <text evidence="1">Homodimer.</text>
</comment>
<comment type="similarity">
    <text evidence="1">Belongs to the anthranilate phosphoribosyltransferase family.</text>
</comment>
<reference key="1">
    <citation type="submission" date="2008-10" db="EMBL/GenBank/DDBJ databases">
        <title>Genome sequence of Bacillus cereus G9842.</title>
        <authorList>
            <person name="Dodson R.J."/>
            <person name="Durkin A.S."/>
            <person name="Rosovitz M.J."/>
            <person name="Rasko D.A."/>
            <person name="Hoffmaster A."/>
            <person name="Ravel J."/>
            <person name="Sutton G."/>
        </authorList>
    </citation>
    <scope>NUCLEOTIDE SEQUENCE [LARGE SCALE GENOMIC DNA]</scope>
    <source>
        <strain>G9842</strain>
    </source>
</reference>
<accession>B7IM73</accession>
<evidence type="ECO:0000255" key="1">
    <source>
        <dbReference type="HAMAP-Rule" id="MF_00211"/>
    </source>
</evidence>
<feature type="chain" id="PRO_1000198805" description="Anthranilate phosphoribosyltransferase">
    <location>
        <begin position="1"/>
        <end position="341"/>
    </location>
</feature>
<feature type="binding site" evidence="1">
    <location>
        <position position="79"/>
    </location>
    <ligand>
        <name>5-phospho-alpha-D-ribose 1-diphosphate</name>
        <dbReference type="ChEBI" id="CHEBI:58017"/>
    </ligand>
</feature>
<feature type="binding site" evidence="1">
    <location>
        <position position="79"/>
    </location>
    <ligand>
        <name>anthranilate</name>
        <dbReference type="ChEBI" id="CHEBI:16567"/>
        <label>1</label>
    </ligand>
</feature>
<feature type="binding site" evidence="1">
    <location>
        <begin position="82"/>
        <end position="83"/>
    </location>
    <ligand>
        <name>5-phospho-alpha-D-ribose 1-diphosphate</name>
        <dbReference type="ChEBI" id="CHEBI:58017"/>
    </ligand>
</feature>
<feature type="binding site" evidence="1">
    <location>
        <position position="87"/>
    </location>
    <ligand>
        <name>5-phospho-alpha-D-ribose 1-diphosphate</name>
        <dbReference type="ChEBI" id="CHEBI:58017"/>
    </ligand>
</feature>
<feature type="binding site" evidence="1">
    <location>
        <begin position="89"/>
        <end position="92"/>
    </location>
    <ligand>
        <name>5-phospho-alpha-D-ribose 1-diphosphate</name>
        <dbReference type="ChEBI" id="CHEBI:58017"/>
    </ligand>
</feature>
<feature type="binding site" evidence="1">
    <location>
        <position position="91"/>
    </location>
    <ligand>
        <name>Mg(2+)</name>
        <dbReference type="ChEBI" id="CHEBI:18420"/>
        <label>1</label>
    </ligand>
</feature>
<feature type="binding site" evidence="1">
    <location>
        <begin position="107"/>
        <end position="115"/>
    </location>
    <ligand>
        <name>5-phospho-alpha-D-ribose 1-diphosphate</name>
        <dbReference type="ChEBI" id="CHEBI:58017"/>
    </ligand>
</feature>
<feature type="binding site" evidence="1">
    <location>
        <position position="110"/>
    </location>
    <ligand>
        <name>anthranilate</name>
        <dbReference type="ChEBI" id="CHEBI:16567"/>
        <label>1</label>
    </ligand>
</feature>
<feature type="binding site" evidence="1">
    <location>
        <position position="119"/>
    </location>
    <ligand>
        <name>5-phospho-alpha-D-ribose 1-diphosphate</name>
        <dbReference type="ChEBI" id="CHEBI:58017"/>
    </ligand>
</feature>
<feature type="binding site" evidence="1">
    <location>
        <position position="165"/>
    </location>
    <ligand>
        <name>anthranilate</name>
        <dbReference type="ChEBI" id="CHEBI:16567"/>
        <label>2</label>
    </ligand>
</feature>
<feature type="binding site" evidence="1">
    <location>
        <position position="224"/>
    </location>
    <ligand>
        <name>Mg(2+)</name>
        <dbReference type="ChEBI" id="CHEBI:18420"/>
        <label>2</label>
    </ligand>
</feature>
<feature type="binding site" evidence="1">
    <location>
        <position position="225"/>
    </location>
    <ligand>
        <name>Mg(2+)</name>
        <dbReference type="ChEBI" id="CHEBI:18420"/>
        <label>1</label>
    </ligand>
</feature>
<feature type="binding site" evidence="1">
    <location>
        <position position="225"/>
    </location>
    <ligand>
        <name>Mg(2+)</name>
        <dbReference type="ChEBI" id="CHEBI:18420"/>
        <label>2</label>
    </ligand>
</feature>
<dbReference type="EC" id="2.4.2.18" evidence="1"/>
<dbReference type="EMBL" id="CP001186">
    <property type="protein sequence ID" value="ACK98187.1"/>
    <property type="molecule type" value="Genomic_DNA"/>
</dbReference>
<dbReference type="RefSeq" id="WP_001067363.1">
    <property type="nucleotide sequence ID" value="NC_011772.1"/>
</dbReference>
<dbReference type="SMR" id="B7IM73"/>
<dbReference type="KEGG" id="bcg:BCG9842_B4051"/>
<dbReference type="HOGENOM" id="CLU_034315_2_1_9"/>
<dbReference type="UniPathway" id="UPA00035">
    <property type="reaction ID" value="UER00041"/>
</dbReference>
<dbReference type="Proteomes" id="UP000006744">
    <property type="component" value="Chromosome"/>
</dbReference>
<dbReference type="GO" id="GO:0005829">
    <property type="term" value="C:cytosol"/>
    <property type="evidence" value="ECO:0007669"/>
    <property type="project" value="TreeGrafter"/>
</dbReference>
<dbReference type="GO" id="GO:0004048">
    <property type="term" value="F:anthranilate phosphoribosyltransferase activity"/>
    <property type="evidence" value="ECO:0007669"/>
    <property type="project" value="UniProtKB-UniRule"/>
</dbReference>
<dbReference type="GO" id="GO:0000287">
    <property type="term" value="F:magnesium ion binding"/>
    <property type="evidence" value="ECO:0007669"/>
    <property type="project" value="UniProtKB-UniRule"/>
</dbReference>
<dbReference type="GO" id="GO:0000162">
    <property type="term" value="P:L-tryptophan biosynthetic process"/>
    <property type="evidence" value="ECO:0007669"/>
    <property type="project" value="UniProtKB-UniRule"/>
</dbReference>
<dbReference type="FunFam" id="3.40.1030.10:FF:000002">
    <property type="entry name" value="Anthranilate phosphoribosyltransferase"/>
    <property type="match status" value="1"/>
</dbReference>
<dbReference type="Gene3D" id="3.40.1030.10">
    <property type="entry name" value="Nucleoside phosphorylase/phosphoribosyltransferase catalytic domain"/>
    <property type="match status" value="1"/>
</dbReference>
<dbReference type="Gene3D" id="1.20.970.10">
    <property type="entry name" value="Transferase, Pyrimidine Nucleoside Phosphorylase, Chain C"/>
    <property type="match status" value="1"/>
</dbReference>
<dbReference type="HAMAP" id="MF_00211">
    <property type="entry name" value="TrpD"/>
    <property type="match status" value="1"/>
</dbReference>
<dbReference type="InterPro" id="IPR005940">
    <property type="entry name" value="Anthranilate_Pribosyl_Tfrase"/>
</dbReference>
<dbReference type="InterPro" id="IPR000312">
    <property type="entry name" value="Glycosyl_Trfase_fam3"/>
</dbReference>
<dbReference type="InterPro" id="IPR017459">
    <property type="entry name" value="Glycosyl_Trfase_fam3_N_dom"/>
</dbReference>
<dbReference type="InterPro" id="IPR036320">
    <property type="entry name" value="Glycosyl_Trfase_fam3_N_dom_sf"/>
</dbReference>
<dbReference type="InterPro" id="IPR035902">
    <property type="entry name" value="Nuc_phospho_transferase"/>
</dbReference>
<dbReference type="NCBIfam" id="TIGR01245">
    <property type="entry name" value="trpD"/>
    <property type="match status" value="1"/>
</dbReference>
<dbReference type="PANTHER" id="PTHR43285">
    <property type="entry name" value="ANTHRANILATE PHOSPHORIBOSYLTRANSFERASE"/>
    <property type="match status" value="1"/>
</dbReference>
<dbReference type="PANTHER" id="PTHR43285:SF2">
    <property type="entry name" value="ANTHRANILATE PHOSPHORIBOSYLTRANSFERASE"/>
    <property type="match status" value="1"/>
</dbReference>
<dbReference type="Pfam" id="PF02885">
    <property type="entry name" value="Glycos_trans_3N"/>
    <property type="match status" value="1"/>
</dbReference>
<dbReference type="Pfam" id="PF00591">
    <property type="entry name" value="Glycos_transf_3"/>
    <property type="match status" value="1"/>
</dbReference>
<dbReference type="SUPFAM" id="SSF52418">
    <property type="entry name" value="Nucleoside phosphorylase/phosphoribosyltransferase catalytic domain"/>
    <property type="match status" value="1"/>
</dbReference>
<dbReference type="SUPFAM" id="SSF47648">
    <property type="entry name" value="Nucleoside phosphorylase/phosphoribosyltransferase N-terminal domain"/>
    <property type="match status" value="1"/>
</dbReference>